<protein>
    <recommendedName>
        <fullName evidence="1">ATP synthase subunit alpha</fullName>
        <ecNumber evidence="1">7.1.2.2</ecNumber>
    </recommendedName>
    <alternativeName>
        <fullName evidence="1">ATP synthase F1 sector subunit alpha</fullName>
    </alternativeName>
    <alternativeName>
        <fullName evidence="1">F-ATPase subunit alpha</fullName>
    </alternativeName>
</protein>
<sequence length="509" mass="55072">MNNTISPGEVLKVIKERIENFDNQVKSDSVGEVISIKDGIALIYGLEKAKFGEVVVFANGITGIVLGLDCDTASVVVFGDERSVGEGDTAKCTGKLMDVPVGLELLGRVVDALGNPIDGAGSIDSKTRLPVEIKAPGIIARQSVTEPLQTGIKIIDMLIPIGRGQRELIIGDRKTGKTAIAIDTIINQKAHNDVVSEKEKVYCIYVAIGQKNSSVARIVDKLRVSGALEYTIVVAAGASDTVSFQYLAPYAACAMGEFFRDNGMHCLIVYDDLSKHAVAYRQMSLLLRRPPGREAYPGDVFFLHSRLLERAAKMSDKEGGGSLTALPIIETQAGDVSAYVPTNVISITDGQIFLESEIFYKGLRPAVNVGLSVSRVGSAAQTKSVKKVAGSVKLSLAQYRELEDFAKFGSDIDVHSQKVLDRGRRMMELLKQKQYSPLSVPEQVAVIFAGTSGCLDGVSVSDISRFEEMLLKELNENYPDVLSSILNNFTDDVKDLLLEIIGKVTSNFE</sequence>
<accession>Q2GHX3</accession>
<evidence type="ECO:0000255" key="1">
    <source>
        <dbReference type="HAMAP-Rule" id="MF_01346"/>
    </source>
</evidence>
<feature type="chain" id="PRO_0000238245" description="ATP synthase subunit alpha">
    <location>
        <begin position="1"/>
        <end position="509"/>
    </location>
</feature>
<feature type="binding site" evidence="1">
    <location>
        <begin position="171"/>
        <end position="178"/>
    </location>
    <ligand>
        <name>ATP</name>
        <dbReference type="ChEBI" id="CHEBI:30616"/>
    </ligand>
</feature>
<feature type="site" description="Required for activity" evidence="1">
    <location>
        <position position="372"/>
    </location>
</feature>
<proteinExistence type="inferred from homology"/>
<organism>
    <name type="scientific">Ehrlichia chaffeensis (strain ATCC CRL-10679 / Arkansas)</name>
    <dbReference type="NCBI Taxonomy" id="205920"/>
    <lineage>
        <taxon>Bacteria</taxon>
        <taxon>Pseudomonadati</taxon>
        <taxon>Pseudomonadota</taxon>
        <taxon>Alphaproteobacteria</taxon>
        <taxon>Rickettsiales</taxon>
        <taxon>Anaplasmataceae</taxon>
        <taxon>Ehrlichia</taxon>
    </lineage>
</organism>
<gene>
    <name evidence="1" type="primary">atpA</name>
    <name type="ordered locus">ECH_0132</name>
</gene>
<keyword id="KW-0066">ATP synthesis</keyword>
<keyword id="KW-0067">ATP-binding</keyword>
<keyword id="KW-0997">Cell inner membrane</keyword>
<keyword id="KW-1003">Cell membrane</keyword>
<keyword id="KW-0139">CF(1)</keyword>
<keyword id="KW-0375">Hydrogen ion transport</keyword>
<keyword id="KW-0406">Ion transport</keyword>
<keyword id="KW-0472">Membrane</keyword>
<keyword id="KW-0547">Nucleotide-binding</keyword>
<keyword id="KW-1185">Reference proteome</keyword>
<keyword id="KW-1278">Translocase</keyword>
<keyword id="KW-0813">Transport</keyword>
<comment type="function">
    <text evidence="1">Produces ATP from ADP in the presence of a proton gradient across the membrane. The alpha chain is a regulatory subunit.</text>
</comment>
<comment type="catalytic activity">
    <reaction evidence="1">
        <text>ATP + H2O + 4 H(+)(in) = ADP + phosphate + 5 H(+)(out)</text>
        <dbReference type="Rhea" id="RHEA:57720"/>
        <dbReference type="ChEBI" id="CHEBI:15377"/>
        <dbReference type="ChEBI" id="CHEBI:15378"/>
        <dbReference type="ChEBI" id="CHEBI:30616"/>
        <dbReference type="ChEBI" id="CHEBI:43474"/>
        <dbReference type="ChEBI" id="CHEBI:456216"/>
        <dbReference type="EC" id="7.1.2.2"/>
    </reaction>
</comment>
<comment type="subunit">
    <text evidence="1">F-type ATPases have 2 components, CF(1) - the catalytic core - and CF(0) - the membrane proton channel. CF(1) has five subunits: alpha(3), beta(3), gamma(1), delta(1), epsilon(1). CF(0) has three main subunits: a(1), b(2) and c(9-12). The alpha and beta chains form an alternating ring which encloses part of the gamma chain. CF(1) is attached to CF(0) by a central stalk formed by the gamma and epsilon chains, while a peripheral stalk is formed by the delta and b chains.</text>
</comment>
<comment type="subcellular location">
    <subcellularLocation>
        <location evidence="1">Cell inner membrane</location>
        <topology evidence="1">Peripheral membrane protein</topology>
    </subcellularLocation>
</comment>
<comment type="similarity">
    <text evidence="1">Belongs to the ATPase alpha/beta chains family.</text>
</comment>
<dbReference type="EC" id="7.1.2.2" evidence="1"/>
<dbReference type="EMBL" id="CP000236">
    <property type="protein sequence ID" value="ABD44617.1"/>
    <property type="molecule type" value="Genomic_DNA"/>
</dbReference>
<dbReference type="RefSeq" id="WP_006010102.1">
    <property type="nucleotide sequence ID" value="NC_007799.1"/>
</dbReference>
<dbReference type="SMR" id="Q2GHX3"/>
<dbReference type="STRING" id="205920.ECH_0132"/>
<dbReference type="KEGG" id="ech:ECH_0132"/>
<dbReference type="eggNOG" id="COG0056">
    <property type="taxonomic scope" value="Bacteria"/>
</dbReference>
<dbReference type="HOGENOM" id="CLU_010091_2_1_5"/>
<dbReference type="OrthoDB" id="9803053at2"/>
<dbReference type="Proteomes" id="UP000008320">
    <property type="component" value="Chromosome"/>
</dbReference>
<dbReference type="GO" id="GO:0005886">
    <property type="term" value="C:plasma membrane"/>
    <property type="evidence" value="ECO:0007669"/>
    <property type="project" value="UniProtKB-SubCell"/>
</dbReference>
<dbReference type="GO" id="GO:0045259">
    <property type="term" value="C:proton-transporting ATP synthase complex"/>
    <property type="evidence" value="ECO:0007669"/>
    <property type="project" value="UniProtKB-KW"/>
</dbReference>
<dbReference type="GO" id="GO:0043531">
    <property type="term" value="F:ADP binding"/>
    <property type="evidence" value="ECO:0007669"/>
    <property type="project" value="TreeGrafter"/>
</dbReference>
<dbReference type="GO" id="GO:0005524">
    <property type="term" value="F:ATP binding"/>
    <property type="evidence" value="ECO:0007669"/>
    <property type="project" value="UniProtKB-UniRule"/>
</dbReference>
<dbReference type="GO" id="GO:0046933">
    <property type="term" value="F:proton-transporting ATP synthase activity, rotational mechanism"/>
    <property type="evidence" value="ECO:0007669"/>
    <property type="project" value="UniProtKB-UniRule"/>
</dbReference>
<dbReference type="CDD" id="cd18113">
    <property type="entry name" value="ATP-synt_F1_alpha_C"/>
    <property type="match status" value="1"/>
</dbReference>
<dbReference type="CDD" id="cd18116">
    <property type="entry name" value="ATP-synt_F1_alpha_N"/>
    <property type="match status" value="1"/>
</dbReference>
<dbReference type="CDD" id="cd01132">
    <property type="entry name" value="F1-ATPase_alpha_CD"/>
    <property type="match status" value="1"/>
</dbReference>
<dbReference type="FunFam" id="1.20.150.20:FF:000001">
    <property type="entry name" value="ATP synthase subunit alpha"/>
    <property type="match status" value="1"/>
</dbReference>
<dbReference type="FunFam" id="3.40.50.300:FF:002432">
    <property type="entry name" value="ATP synthase subunit alpha, mitochondrial"/>
    <property type="match status" value="1"/>
</dbReference>
<dbReference type="Gene3D" id="2.40.30.20">
    <property type="match status" value="1"/>
</dbReference>
<dbReference type="Gene3D" id="1.20.150.20">
    <property type="entry name" value="ATP synthase alpha/beta chain, C-terminal domain"/>
    <property type="match status" value="1"/>
</dbReference>
<dbReference type="Gene3D" id="3.40.50.300">
    <property type="entry name" value="P-loop containing nucleotide triphosphate hydrolases"/>
    <property type="match status" value="1"/>
</dbReference>
<dbReference type="HAMAP" id="MF_01346">
    <property type="entry name" value="ATP_synth_alpha_bact"/>
    <property type="match status" value="1"/>
</dbReference>
<dbReference type="InterPro" id="IPR023366">
    <property type="entry name" value="ATP_synth_asu-like_sf"/>
</dbReference>
<dbReference type="InterPro" id="IPR000793">
    <property type="entry name" value="ATP_synth_asu_C"/>
</dbReference>
<dbReference type="InterPro" id="IPR038376">
    <property type="entry name" value="ATP_synth_asu_C_sf"/>
</dbReference>
<dbReference type="InterPro" id="IPR033732">
    <property type="entry name" value="ATP_synth_F1_a_nt-bd_dom"/>
</dbReference>
<dbReference type="InterPro" id="IPR005294">
    <property type="entry name" value="ATP_synth_F1_asu"/>
</dbReference>
<dbReference type="InterPro" id="IPR020003">
    <property type="entry name" value="ATPase_a/bsu_AS"/>
</dbReference>
<dbReference type="InterPro" id="IPR004100">
    <property type="entry name" value="ATPase_F1/V1/A1_a/bsu_N"/>
</dbReference>
<dbReference type="InterPro" id="IPR036121">
    <property type="entry name" value="ATPase_F1/V1/A1_a/bsu_N_sf"/>
</dbReference>
<dbReference type="InterPro" id="IPR000194">
    <property type="entry name" value="ATPase_F1/V1/A1_a/bsu_nucl-bd"/>
</dbReference>
<dbReference type="InterPro" id="IPR027417">
    <property type="entry name" value="P-loop_NTPase"/>
</dbReference>
<dbReference type="NCBIfam" id="TIGR00962">
    <property type="entry name" value="atpA"/>
    <property type="match status" value="1"/>
</dbReference>
<dbReference type="NCBIfam" id="NF009884">
    <property type="entry name" value="PRK13343.1"/>
    <property type="match status" value="1"/>
</dbReference>
<dbReference type="PANTHER" id="PTHR48082">
    <property type="entry name" value="ATP SYNTHASE SUBUNIT ALPHA, MITOCHONDRIAL"/>
    <property type="match status" value="1"/>
</dbReference>
<dbReference type="PANTHER" id="PTHR48082:SF2">
    <property type="entry name" value="ATP SYNTHASE SUBUNIT ALPHA, MITOCHONDRIAL"/>
    <property type="match status" value="1"/>
</dbReference>
<dbReference type="Pfam" id="PF00006">
    <property type="entry name" value="ATP-synt_ab"/>
    <property type="match status" value="1"/>
</dbReference>
<dbReference type="Pfam" id="PF00306">
    <property type="entry name" value="ATP-synt_ab_C"/>
    <property type="match status" value="1"/>
</dbReference>
<dbReference type="Pfam" id="PF02874">
    <property type="entry name" value="ATP-synt_ab_N"/>
    <property type="match status" value="1"/>
</dbReference>
<dbReference type="PIRSF" id="PIRSF039088">
    <property type="entry name" value="F_ATPase_subunit_alpha"/>
    <property type="match status" value="1"/>
</dbReference>
<dbReference type="SUPFAM" id="SSF47917">
    <property type="entry name" value="C-terminal domain of alpha and beta subunits of F1 ATP synthase"/>
    <property type="match status" value="1"/>
</dbReference>
<dbReference type="SUPFAM" id="SSF50615">
    <property type="entry name" value="N-terminal domain of alpha and beta subunits of F1 ATP synthase"/>
    <property type="match status" value="1"/>
</dbReference>
<dbReference type="SUPFAM" id="SSF52540">
    <property type="entry name" value="P-loop containing nucleoside triphosphate hydrolases"/>
    <property type="match status" value="1"/>
</dbReference>
<dbReference type="PROSITE" id="PS00152">
    <property type="entry name" value="ATPASE_ALPHA_BETA"/>
    <property type="match status" value="1"/>
</dbReference>
<reference key="1">
    <citation type="journal article" date="2006" name="PLoS Genet.">
        <title>Comparative genomics of emerging human ehrlichiosis agents.</title>
        <authorList>
            <person name="Dunning Hotopp J.C."/>
            <person name="Lin M."/>
            <person name="Madupu R."/>
            <person name="Crabtree J."/>
            <person name="Angiuoli S.V."/>
            <person name="Eisen J.A."/>
            <person name="Seshadri R."/>
            <person name="Ren Q."/>
            <person name="Wu M."/>
            <person name="Utterback T.R."/>
            <person name="Smith S."/>
            <person name="Lewis M."/>
            <person name="Khouri H."/>
            <person name="Zhang C."/>
            <person name="Niu H."/>
            <person name="Lin Q."/>
            <person name="Ohashi N."/>
            <person name="Zhi N."/>
            <person name="Nelson W.C."/>
            <person name="Brinkac L.M."/>
            <person name="Dodson R.J."/>
            <person name="Rosovitz M.J."/>
            <person name="Sundaram J.P."/>
            <person name="Daugherty S.C."/>
            <person name="Davidsen T."/>
            <person name="Durkin A.S."/>
            <person name="Gwinn M.L."/>
            <person name="Haft D.H."/>
            <person name="Selengut J.D."/>
            <person name="Sullivan S.A."/>
            <person name="Zafar N."/>
            <person name="Zhou L."/>
            <person name="Benahmed F."/>
            <person name="Forberger H."/>
            <person name="Halpin R."/>
            <person name="Mulligan S."/>
            <person name="Robinson J."/>
            <person name="White O."/>
            <person name="Rikihisa Y."/>
            <person name="Tettelin H."/>
        </authorList>
    </citation>
    <scope>NUCLEOTIDE SEQUENCE [LARGE SCALE GENOMIC DNA]</scope>
    <source>
        <strain>ATCC CRL-10679 / Arkansas</strain>
    </source>
</reference>
<name>ATPA_EHRCR</name>